<name>NUDL_ESCF3</name>
<accession>B7LPN4</accession>
<dbReference type="EC" id="3.6.1.-" evidence="1"/>
<dbReference type="EMBL" id="CU928158">
    <property type="protein sequence ID" value="CAQ88787.1"/>
    <property type="molecule type" value="Genomic_DNA"/>
</dbReference>
<dbReference type="RefSeq" id="WP_000456805.1">
    <property type="nucleotide sequence ID" value="NC_011740.1"/>
</dbReference>
<dbReference type="SMR" id="B7LPN4"/>
<dbReference type="GeneID" id="75057691"/>
<dbReference type="KEGG" id="efe:EFER_1263"/>
<dbReference type="HOGENOM" id="CLU_040940_5_2_6"/>
<dbReference type="OrthoDB" id="9802805at2"/>
<dbReference type="Proteomes" id="UP000000745">
    <property type="component" value="Chromosome"/>
</dbReference>
<dbReference type="GO" id="GO:0010945">
    <property type="term" value="F:coenzyme A diphosphatase activity"/>
    <property type="evidence" value="ECO:0007669"/>
    <property type="project" value="InterPro"/>
</dbReference>
<dbReference type="GO" id="GO:0000287">
    <property type="term" value="F:magnesium ion binding"/>
    <property type="evidence" value="ECO:0007669"/>
    <property type="project" value="UniProtKB-UniRule"/>
</dbReference>
<dbReference type="GO" id="GO:0030145">
    <property type="term" value="F:manganese ion binding"/>
    <property type="evidence" value="ECO:0007669"/>
    <property type="project" value="UniProtKB-UniRule"/>
</dbReference>
<dbReference type="GO" id="GO:0009132">
    <property type="term" value="P:nucleoside diphosphate metabolic process"/>
    <property type="evidence" value="ECO:0007669"/>
    <property type="project" value="InterPro"/>
</dbReference>
<dbReference type="CDD" id="cd03426">
    <property type="entry name" value="NUDIX_CoAse_Nudt7"/>
    <property type="match status" value="1"/>
</dbReference>
<dbReference type="FunFam" id="3.90.79.10:FF:000013">
    <property type="entry name" value="Uncharacterized Nudix hydrolase NudL"/>
    <property type="match status" value="1"/>
</dbReference>
<dbReference type="Gene3D" id="3.90.79.10">
    <property type="entry name" value="Nucleoside Triphosphate Pyrophosphohydrolase"/>
    <property type="match status" value="1"/>
</dbReference>
<dbReference type="HAMAP" id="MF_01592">
    <property type="entry name" value="Nudix_NudL"/>
    <property type="match status" value="1"/>
</dbReference>
<dbReference type="InterPro" id="IPR045121">
    <property type="entry name" value="CoAse"/>
</dbReference>
<dbReference type="InterPro" id="IPR015797">
    <property type="entry name" value="NUDIX_hydrolase-like_dom_sf"/>
</dbReference>
<dbReference type="InterPro" id="IPR000086">
    <property type="entry name" value="NUDIX_hydrolase_dom"/>
</dbReference>
<dbReference type="InterPro" id="IPR000059">
    <property type="entry name" value="NUDIX_hydrolase_NudL_CS"/>
</dbReference>
<dbReference type="InterPro" id="IPR023735">
    <property type="entry name" value="Nudix_NudL"/>
</dbReference>
<dbReference type="NCBIfam" id="NF007980">
    <property type="entry name" value="PRK10707.1"/>
    <property type="match status" value="1"/>
</dbReference>
<dbReference type="PANTHER" id="PTHR12992:SF11">
    <property type="entry name" value="MITOCHONDRIAL COENZYME A DIPHOSPHATASE NUDT8"/>
    <property type="match status" value="1"/>
</dbReference>
<dbReference type="PANTHER" id="PTHR12992">
    <property type="entry name" value="NUDIX HYDROLASE"/>
    <property type="match status" value="1"/>
</dbReference>
<dbReference type="Pfam" id="PF00293">
    <property type="entry name" value="NUDIX"/>
    <property type="match status" value="1"/>
</dbReference>
<dbReference type="SUPFAM" id="SSF55811">
    <property type="entry name" value="Nudix"/>
    <property type="match status" value="1"/>
</dbReference>
<dbReference type="PROSITE" id="PS51462">
    <property type="entry name" value="NUDIX"/>
    <property type="match status" value="1"/>
</dbReference>
<dbReference type="PROSITE" id="PS01293">
    <property type="entry name" value="NUDIX_COA"/>
    <property type="match status" value="1"/>
</dbReference>
<gene>
    <name evidence="1" type="primary">nudL</name>
    <name type="ordered locus">EFER_1263</name>
</gene>
<protein>
    <recommendedName>
        <fullName evidence="1">Uncharacterized Nudix hydrolase NudL</fullName>
        <ecNumber evidence="1">3.6.1.-</ecNumber>
    </recommendedName>
</protein>
<feature type="chain" id="PRO_1000147820" description="Uncharacterized Nudix hydrolase NudL">
    <location>
        <begin position="1"/>
        <end position="192"/>
    </location>
</feature>
<feature type="domain" description="Nudix hydrolase" evidence="1">
    <location>
        <begin position="29"/>
        <end position="160"/>
    </location>
</feature>
<feature type="short sequence motif" description="Nudix box">
    <location>
        <begin position="67"/>
        <end position="89"/>
    </location>
</feature>
<feature type="binding site" evidence="1">
    <location>
        <position position="83"/>
    </location>
    <ligand>
        <name>Mg(2+)</name>
        <dbReference type="ChEBI" id="CHEBI:18420"/>
    </ligand>
</feature>
<feature type="binding site" evidence="1">
    <location>
        <position position="87"/>
    </location>
    <ligand>
        <name>Mg(2+)</name>
        <dbReference type="ChEBI" id="CHEBI:18420"/>
    </ligand>
</feature>
<reference key="1">
    <citation type="journal article" date="2009" name="PLoS Genet.">
        <title>Organised genome dynamics in the Escherichia coli species results in highly diverse adaptive paths.</title>
        <authorList>
            <person name="Touchon M."/>
            <person name="Hoede C."/>
            <person name="Tenaillon O."/>
            <person name="Barbe V."/>
            <person name="Baeriswyl S."/>
            <person name="Bidet P."/>
            <person name="Bingen E."/>
            <person name="Bonacorsi S."/>
            <person name="Bouchier C."/>
            <person name="Bouvet O."/>
            <person name="Calteau A."/>
            <person name="Chiapello H."/>
            <person name="Clermont O."/>
            <person name="Cruveiller S."/>
            <person name="Danchin A."/>
            <person name="Diard M."/>
            <person name="Dossat C."/>
            <person name="Karoui M.E."/>
            <person name="Frapy E."/>
            <person name="Garry L."/>
            <person name="Ghigo J.M."/>
            <person name="Gilles A.M."/>
            <person name="Johnson J."/>
            <person name="Le Bouguenec C."/>
            <person name="Lescat M."/>
            <person name="Mangenot S."/>
            <person name="Martinez-Jehanne V."/>
            <person name="Matic I."/>
            <person name="Nassif X."/>
            <person name="Oztas S."/>
            <person name="Petit M.A."/>
            <person name="Pichon C."/>
            <person name="Rouy Z."/>
            <person name="Ruf C.S."/>
            <person name="Schneider D."/>
            <person name="Tourret J."/>
            <person name="Vacherie B."/>
            <person name="Vallenet D."/>
            <person name="Medigue C."/>
            <person name="Rocha E.P.C."/>
            <person name="Denamur E."/>
        </authorList>
    </citation>
    <scope>NUCLEOTIDE SEQUENCE [LARGE SCALE GENOMIC DNA]</scope>
    <source>
        <strain>ATCC 35469 / DSM 13698 / BCRC 15582 / CCUG 18766 / IAM 14443 / JCM 21226 / LMG 7866 / NBRC 102419 / NCTC 12128 / CDC 0568-73</strain>
    </source>
</reference>
<sequence>MEYSSLTLDDFLSRFQLLRPQINRETLNHRQAAVLIPIVRRPQPGLLLTQRSIHLRKHAGQVAFPGGAVDDTDTSVIAAALREAEEEVAIPPSSVEVIGVLPPVDSVTGYQVTPVVGIIPPDLPYHASEDEVSAVFEMPLAQALHLGRYHPLDIYRRGDSHRVWLSWYEHYFVWGMTAGIIRELALQIGVKP</sequence>
<proteinExistence type="inferred from homology"/>
<comment type="function">
    <text evidence="1">Probably mediates the hydrolysis of some nucleoside diphosphate derivatives.</text>
</comment>
<comment type="cofactor">
    <cofactor evidence="1">
        <name>Mn(2+)</name>
        <dbReference type="ChEBI" id="CHEBI:29035"/>
    </cofactor>
    <cofactor evidence="1">
        <name>Mg(2+)</name>
        <dbReference type="ChEBI" id="CHEBI:18420"/>
    </cofactor>
</comment>
<comment type="similarity">
    <text evidence="1">Belongs to the Nudix hydrolase family. PCD1 subfamily.</text>
</comment>
<keyword id="KW-0378">Hydrolase</keyword>
<keyword id="KW-0460">Magnesium</keyword>
<keyword id="KW-0464">Manganese</keyword>
<keyword id="KW-0479">Metal-binding</keyword>
<organism>
    <name type="scientific">Escherichia fergusonii (strain ATCC 35469 / DSM 13698 / CCUG 18766 / IAM 14443 / JCM 21226 / LMG 7866 / NBRC 102419 / NCTC 12128 / CDC 0568-73)</name>
    <dbReference type="NCBI Taxonomy" id="585054"/>
    <lineage>
        <taxon>Bacteria</taxon>
        <taxon>Pseudomonadati</taxon>
        <taxon>Pseudomonadota</taxon>
        <taxon>Gammaproteobacteria</taxon>
        <taxon>Enterobacterales</taxon>
        <taxon>Enterobacteriaceae</taxon>
        <taxon>Escherichia</taxon>
    </lineage>
</organism>
<evidence type="ECO:0000255" key="1">
    <source>
        <dbReference type="HAMAP-Rule" id="MF_01592"/>
    </source>
</evidence>